<reference key="1">
    <citation type="journal article" date="2011" name="J. Bacteriol.">
        <title>Comparative genomics of 28 Salmonella enterica isolates: evidence for CRISPR-mediated adaptive sublineage evolution.</title>
        <authorList>
            <person name="Fricke W.F."/>
            <person name="Mammel M.K."/>
            <person name="McDermott P.F."/>
            <person name="Tartera C."/>
            <person name="White D.G."/>
            <person name="Leclerc J.E."/>
            <person name="Ravel J."/>
            <person name="Cebula T.A."/>
        </authorList>
    </citation>
    <scope>NUCLEOTIDE SEQUENCE [LARGE SCALE GENOMIC DNA]</scope>
    <source>
        <strain>CT_02021853</strain>
    </source>
</reference>
<gene>
    <name evidence="1" type="primary">ispH</name>
    <name type="ordered locus">SeD_A0053</name>
</gene>
<accession>B5FHE3</accession>
<comment type="function">
    <text evidence="1">Catalyzes the conversion of 1-hydroxy-2-methyl-2-(E)-butenyl 4-diphosphate (HMBPP) into a mixture of isopentenyl diphosphate (IPP) and dimethylallyl diphosphate (DMAPP). Acts in the terminal step of the DOXP/MEP pathway for isoprenoid precursor biosynthesis.</text>
</comment>
<comment type="catalytic activity">
    <reaction evidence="1">
        <text>isopentenyl diphosphate + 2 oxidized [2Fe-2S]-[ferredoxin] + H2O = (2E)-4-hydroxy-3-methylbut-2-enyl diphosphate + 2 reduced [2Fe-2S]-[ferredoxin] + 2 H(+)</text>
        <dbReference type="Rhea" id="RHEA:24488"/>
        <dbReference type="Rhea" id="RHEA-COMP:10000"/>
        <dbReference type="Rhea" id="RHEA-COMP:10001"/>
        <dbReference type="ChEBI" id="CHEBI:15377"/>
        <dbReference type="ChEBI" id="CHEBI:15378"/>
        <dbReference type="ChEBI" id="CHEBI:33737"/>
        <dbReference type="ChEBI" id="CHEBI:33738"/>
        <dbReference type="ChEBI" id="CHEBI:128753"/>
        <dbReference type="ChEBI" id="CHEBI:128769"/>
        <dbReference type="EC" id="1.17.7.4"/>
    </reaction>
</comment>
<comment type="catalytic activity">
    <reaction evidence="1">
        <text>dimethylallyl diphosphate + 2 oxidized [2Fe-2S]-[ferredoxin] + H2O = (2E)-4-hydroxy-3-methylbut-2-enyl diphosphate + 2 reduced [2Fe-2S]-[ferredoxin] + 2 H(+)</text>
        <dbReference type="Rhea" id="RHEA:24825"/>
        <dbReference type="Rhea" id="RHEA-COMP:10000"/>
        <dbReference type="Rhea" id="RHEA-COMP:10001"/>
        <dbReference type="ChEBI" id="CHEBI:15377"/>
        <dbReference type="ChEBI" id="CHEBI:15378"/>
        <dbReference type="ChEBI" id="CHEBI:33737"/>
        <dbReference type="ChEBI" id="CHEBI:33738"/>
        <dbReference type="ChEBI" id="CHEBI:57623"/>
        <dbReference type="ChEBI" id="CHEBI:128753"/>
        <dbReference type="EC" id="1.17.7.4"/>
    </reaction>
</comment>
<comment type="cofactor">
    <cofactor evidence="1">
        <name>[4Fe-4S] cluster</name>
        <dbReference type="ChEBI" id="CHEBI:49883"/>
    </cofactor>
    <text evidence="1">Binds 1 [4Fe-4S] cluster per subunit.</text>
</comment>
<comment type="pathway">
    <text evidence="1">Isoprenoid biosynthesis; dimethylallyl diphosphate biosynthesis; dimethylallyl diphosphate from (2E)-4-hydroxy-3-methylbutenyl diphosphate: step 1/1.</text>
</comment>
<comment type="pathway">
    <text evidence="1">Isoprenoid biosynthesis; isopentenyl diphosphate biosynthesis via DXP pathway; isopentenyl diphosphate from 1-deoxy-D-xylulose 5-phosphate: step 6/6.</text>
</comment>
<comment type="subunit">
    <text evidence="1">Homodimer.</text>
</comment>
<comment type="similarity">
    <text evidence="1">Belongs to the IspH family.</text>
</comment>
<protein>
    <recommendedName>
        <fullName evidence="1">4-hydroxy-3-methylbut-2-enyl diphosphate reductase</fullName>
        <shortName evidence="1">HMBPP reductase</shortName>
        <ecNumber evidence="1">1.17.7.4</ecNumber>
    </recommendedName>
</protein>
<evidence type="ECO:0000255" key="1">
    <source>
        <dbReference type="HAMAP-Rule" id="MF_00191"/>
    </source>
</evidence>
<organism>
    <name type="scientific">Salmonella dublin (strain CT_02021853)</name>
    <dbReference type="NCBI Taxonomy" id="439851"/>
    <lineage>
        <taxon>Bacteria</taxon>
        <taxon>Pseudomonadati</taxon>
        <taxon>Pseudomonadota</taxon>
        <taxon>Gammaproteobacteria</taxon>
        <taxon>Enterobacterales</taxon>
        <taxon>Enterobacteriaceae</taxon>
        <taxon>Salmonella</taxon>
    </lineage>
</organism>
<sequence>MQILLANPRGFCAGVDRAISIVENALAIYGAPIYVRHEVVHNRYVVDSLRQRGAIFIEQISEVPDGAILIFSAHGVSQAVRNEAKSRDLTVFDATCPLVTKVHMEVARASRRGEESILIGHAGHPEVEGTMGQYSNPEGGMYLVESPEDVWTLNVKNEGKLSFMTQTTLSVDDTSDVIDALRKRFPKIVGPRKDDICYATTNRQEAVRALAEQADVVLVVGSKNSSNSNRLAELAQRMGRTAFLIDDAADIQEAWVKEAACVGVTAGASAPDILVQNVIARLREFGGGEAVTLEGREENIVFEVPKELRVDVREVE</sequence>
<feature type="chain" id="PRO_1000098970" description="4-hydroxy-3-methylbut-2-enyl diphosphate reductase">
    <location>
        <begin position="1"/>
        <end position="316"/>
    </location>
</feature>
<feature type="active site" description="Proton donor" evidence="1">
    <location>
        <position position="126"/>
    </location>
</feature>
<feature type="binding site" evidence="1">
    <location>
        <position position="12"/>
    </location>
    <ligand>
        <name>[4Fe-4S] cluster</name>
        <dbReference type="ChEBI" id="CHEBI:49883"/>
    </ligand>
</feature>
<feature type="binding site" evidence="1">
    <location>
        <position position="41"/>
    </location>
    <ligand>
        <name>(2E)-4-hydroxy-3-methylbut-2-enyl diphosphate</name>
        <dbReference type="ChEBI" id="CHEBI:128753"/>
    </ligand>
</feature>
<feature type="binding site" evidence="1">
    <location>
        <position position="41"/>
    </location>
    <ligand>
        <name>dimethylallyl diphosphate</name>
        <dbReference type="ChEBI" id="CHEBI:57623"/>
    </ligand>
</feature>
<feature type="binding site" evidence="1">
    <location>
        <position position="41"/>
    </location>
    <ligand>
        <name>isopentenyl diphosphate</name>
        <dbReference type="ChEBI" id="CHEBI:128769"/>
    </ligand>
</feature>
<feature type="binding site" evidence="1">
    <location>
        <position position="74"/>
    </location>
    <ligand>
        <name>(2E)-4-hydroxy-3-methylbut-2-enyl diphosphate</name>
        <dbReference type="ChEBI" id="CHEBI:128753"/>
    </ligand>
</feature>
<feature type="binding site" evidence="1">
    <location>
        <position position="74"/>
    </location>
    <ligand>
        <name>dimethylallyl diphosphate</name>
        <dbReference type="ChEBI" id="CHEBI:57623"/>
    </ligand>
</feature>
<feature type="binding site" evidence="1">
    <location>
        <position position="74"/>
    </location>
    <ligand>
        <name>isopentenyl diphosphate</name>
        <dbReference type="ChEBI" id="CHEBI:128769"/>
    </ligand>
</feature>
<feature type="binding site" evidence="1">
    <location>
        <position position="96"/>
    </location>
    <ligand>
        <name>[4Fe-4S] cluster</name>
        <dbReference type="ChEBI" id="CHEBI:49883"/>
    </ligand>
</feature>
<feature type="binding site" evidence="1">
    <location>
        <position position="124"/>
    </location>
    <ligand>
        <name>(2E)-4-hydroxy-3-methylbut-2-enyl diphosphate</name>
        <dbReference type="ChEBI" id="CHEBI:128753"/>
    </ligand>
</feature>
<feature type="binding site" evidence="1">
    <location>
        <position position="124"/>
    </location>
    <ligand>
        <name>dimethylallyl diphosphate</name>
        <dbReference type="ChEBI" id="CHEBI:57623"/>
    </ligand>
</feature>
<feature type="binding site" evidence="1">
    <location>
        <position position="124"/>
    </location>
    <ligand>
        <name>isopentenyl diphosphate</name>
        <dbReference type="ChEBI" id="CHEBI:128769"/>
    </ligand>
</feature>
<feature type="binding site" evidence="1">
    <location>
        <position position="167"/>
    </location>
    <ligand>
        <name>(2E)-4-hydroxy-3-methylbut-2-enyl diphosphate</name>
        <dbReference type="ChEBI" id="CHEBI:128753"/>
    </ligand>
</feature>
<feature type="binding site" evidence="1">
    <location>
        <position position="197"/>
    </location>
    <ligand>
        <name>[4Fe-4S] cluster</name>
        <dbReference type="ChEBI" id="CHEBI:49883"/>
    </ligand>
</feature>
<feature type="binding site" evidence="1">
    <location>
        <position position="225"/>
    </location>
    <ligand>
        <name>(2E)-4-hydroxy-3-methylbut-2-enyl diphosphate</name>
        <dbReference type="ChEBI" id="CHEBI:128753"/>
    </ligand>
</feature>
<feature type="binding site" evidence="1">
    <location>
        <position position="225"/>
    </location>
    <ligand>
        <name>dimethylallyl diphosphate</name>
        <dbReference type="ChEBI" id="CHEBI:57623"/>
    </ligand>
</feature>
<feature type="binding site" evidence="1">
    <location>
        <position position="225"/>
    </location>
    <ligand>
        <name>isopentenyl diphosphate</name>
        <dbReference type="ChEBI" id="CHEBI:128769"/>
    </ligand>
</feature>
<feature type="binding site" evidence="1">
    <location>
        <position position="226"/>
    </location>
    <ligand>
        <name>(2E)-4-hydroxy-3-methylbut-2-enyl diphosphate</name>
        <dbReference type="ChEBI" id="CHEBI:128753"/>
    </ligand>
</feature>
<feature type="binding site" evidence="1">
    <location>
        <position position="226"/>
    </location>
    <ligand>
        <name>dimethylallyl diphosphate</name>
        <dbReference type="ChEBI" id="CHEBI:57623"/>
    </ligand>
</feature>
<feature type="binding site" evidence="1">
    <location>
        <position position="226"/>
    </location>
    <ligand>
        <name>isopentenyl diphosphate</name>
        <dbReference type="ChEBI" id="CHEBI:128769"/>
    </ligand>
</feature>
<feature type="binding site" evidence="1">
    <location>
        <position position="227"/>
    </location>
    <ligand>
        <name>(2E)-4-hydroxy-3-methylbut-2-enyl diphosphate</name>
        <dbReference type="ChEBI" id="CHEBI:128753"/>
    </ligand>
</feature>
<feature type="binding site" evidence="1">
    <location>
        <position position="227"/>
    </location>
    <ligand>
        <name>dimethylallyl diphosphate</name>
        <dbReference type="ChEBI" id="CHEBI:57623"/>
    </ligand>
</feature>
<feature type="binding site" evidence="1">
    <location>
        <position position="227"/>
    </location>
    <ligand>
        <name>isopentenyl diphosphate</name>
        <dbReference type="ChEBI" id="CHEBI:128769"/>
    </ligand>
</feature>
<feature type="binding site" evidence="1">
    <location>
        <position position="269"/>
    </location>
    <ligand>
        <name>(2E)-4-hydroxy-3-methylbut-2-enyl diphosphate</name>
        <dbReference type="ChEBI" id="CHEBI:128753"/>
    </ligand>
</feature>
<feature type="binding site" evidence="1">
    <location>
        <position position="269"/>
    </location>
    <ligand>
        <name>dimethylallyl diphosphate</name>
        <dbReference type="ChEBI" id="CHEBI:57623"/>
    </ligand>
</feature>
<feature type="binding site" evidence="1">
    <location>
        <position position="269"/>
    </location>
    <ligand>
        <name>isopentenyl diphosphate</name>
        <dbReference type="ChEBI" id="CHEBI:128769"/>
    </ligand>
</feature>
<keyword id="KW-0004">4Fe-4S</keyword>
<keyword id="KW-0408">Iron</keyword>
<keyword id="KW-0411">Iron-sulfur</keyword>
<keyword id="KW-0414">Isoprene biosynthesis</keyword>
<keyword id="KW-0479">Metal-binding</keyword>
<keyword id="KW-0560">Oxidoreductase</keyword>
<dbReference type="EC" id="1.17.7.4" evidence="1"/>
<dbReference type="EMBL" id="CP001144">
    <property type="protein sequence ID" value="ACH74665.1"/>
    <property type="molecule type" value="Genomic_DNA"/>
</dbReference>
<dbReference type="RefSeq" id="WP_001166428.1">
    <property type="nucleotide sequence ID" value="NC_011205.1"/>
</dbReference>
<dbReference type="SMR" id="B5FHE3"/>
<dbReference type="KEGG" id="sed:SeD_A0053"/>
<dbReference type="HOGENOM" id="CLU_027486_1_0_6"/>
<dbReference type="UniPathway" id="UPA00056">
    <property type="reaction ID" value="UER00097"/>
</dbReference>
<dbReference type="UniPathway" id="UPA00059">
    <property type="reaction ID" value="UER00105"/>
</dbReference>
<dbReference type="Proteomes" id="UP000008322">
    <property type="component" value="Chromosome"/>
</dbReference>
<dbReference type="GO" id="GO:0051539">
    <property type="term" value="F:4 iron, 4 sulfur cluster binding"/>
    <property type="evidence" value="ECO:0007669"/>
    <property type="project" value="UniProtKB-UniRule"/>
</dbReference>
<dbReference type="GO" id="GO:0051745">
    <property type="term" value="F:4-hydroxy-3-methylbut-2-enyl diphosphate reductase activity"/>
    <property type="evidence" value="ECO:0007669"/>
    <property type="project" value="UniProtKB-UniRule"/>
</dbReference>
<dbReference type="GO" id="GO:0046872">
    <property type="term" value="F:metal ion binding"/>
    <property type="evidence" value="ECO:0007669"/>
    <property type="project" value="UniProtKB-KW"/>
</dbReference>
<dbReference type="GO" id="GO:0050992">
    <property type="term" value="P:dimethylallyl diphosphate biosynthetic process"/>
    <property type="evidence" value="ECO:0007669"/>
    <property type="project" value="UniProtKB-UniRule"/>
</dbReference>
<dbReference type="GO" id="GO:0019288">
    <property type="term" value="P:isopentenyl diphosphate biosynthetic process, methylerythritol 4-phosphate pathway"/>
    <property type="evidence" value="ECO:0007669"/>
    <property type="project" value="UniProtKB-UniRule"/>
</dbReference>
<dbReference type="GO" id="GO:0016114">
    <property type="term" value="P:terpenoid biosynthetic process"/>
    <property type="evidence" value="ECO:0007669"/>
    <property type="project" value="UniProtKB-UniRule"/>
</dbReference>
<dbReference type="CDD" id="cd13944">
    <property type="entry name" value="lytB_ispH"/>
    <property type="match status" value="1"/>
</dbReference>
<dbReference type="FunFam" id="3.40.1010.20:FF:000001">
    <property type="entry name" value="4-hydroxy-3-methylbut-2-enyl diphosphate reductase"/>
    <property type="match status" value="1"/>
</dbReference>
<dbReference type="FunFam" id="3.40.50.11270:FF:000001">
    <property type="entry name" value="4-hydroxy-3-methylbut-2-enyl diphosphate reductase"/>
    <property type="match status" value="1"/>
</dbReference>
<dbReference type="Gene3D" id="3.40.50.11270">
    <property type="match status" value="1"/>
</dbReference>
<dbReference type="Gene3D" id="3.40.1010.20">
    <property type="entry name" value="4-hydroxy-3-methylbut-2-enyl diphosphate reductase, catalytic domain"/>
    <property type="match status" value="2"/>
</dbReference>
<dbReference type="HAMAP" id="MF_00191">
    <property type="entry name" value="IspH"/>
    <property type="match status" value="1"/>
</dbReference>
<dbReference type="InterPro" id="IPR003451">
    <property type="entry name" value="LytB/IspH"/>
</dbReference>
<dbReference type="NCBIfam" id="TIGR00216">
    <property type="entry name" value="ispH_lytB"/>
    <property type="match status" value="1"/>
</dbReference>
<dbReference type="NCBIfam" id="NF002188">
    <property type="entry name" value="PRK01045.1-2"/>
    <property type="match status" value="1"/>
</dbReference>
<dbReference type="NCBIfam" id="NF002190">
    <property type="entry name" value="PRK01045.1-4"/>
    <property type="match status" value="1"/>
</dbReference>
<dbReference type="PANTHER" id="PTHR30426">
    <property type="entry name" value="4-HYDROXY-3-METHYLBUT-2-ENYL DIPHOSPHATE REDUCTASE"/>
    <property type="match status" value="1"/>
</dbReference>
<dbReference type="PANTHER" id="PTHR30426:SF0">
    <property type="entry name" value="4-HYDROXY-3-METHYLBUT-2-ENYL DIPHOSPHATE REDUCTASE"/>
    <property type="match status" value="1"/>
</dbReference>
<dbReference type="Pfam" id="PF02401">
    <property type="entry name" value="LYTB"/>
    <property type="match status" value="1"/>
</dbReference>
<proteinExistence type="inferred from homology"/>
<name>ISPH_SALDC</name>